<proteinExistence type="evidence at protein level"/>
<sequence>MMADESFDLESLGSDEIFEGVNLDELEQQAQTQVQAQSSQVVVPSEKQKQNLNLPNSYTNSSQKVRESTVNSQASLSSNDLRTELLIKSGENAILRANLLKQSEANNAALESLNNSIKQKQDEYQRKLEELKKEIEYAKTKSLFHEREAQDAIETMKKMKRDVKNSPIMKKSHEEDGDNKLLSSSDQLAKSTKHAAKNSPSKKKRKTSVATAEDASTDSVSSSIAISDASLSLSLMKDLLSLQKREDLYFSSRTLAYVFGGCMHSLETIEGEEEGECLFNNLKALIYSPDLSMDSSNYVQSVVQTSSSILNYSMKKLLYNASFAITSLFNALLILDPKSSTFIFQENVVSLISGFLLKEYEKSNFLDSKFYVLIDFLYLYLSIARESADDFANITKAVDPSLFESCIRVQNAPSLIKCGVCLIISSTTPSFCASVNLLNADDKSQESLMQLFTTMAHILVVTTRERINFPELNEWITLHRFVISFFTVFIQMSGNIGKEILKVCNPLIVCIGLAITWYHQQLLSSMYPQNECVEILVSLVRLLYILSSEDLSSKFMLAENALQPRFVYAIACCAFGDTEQKAFGNLGEEMYFLTTELLEVCVSPEELEQLYTNF</sequence>
<dbReference type="EMBL" id="X76558">
    <property type="protein sequence ID" value="CAA54058.1"/>
    <property type="molecule type" value="Genomic_DNA"/>
</dbReference>
<dbReference type="EMBL" id="CU329670">
    <property type="protein sequence ID" value="CAB16406.1"/>
    <property type="molecule type" value="Genomic_DNA"/>
</dbReference>
<dbReference type="PIR" id="S42797">
    <property type="entry name" value="S42797"/>
</dbReference>
<dbReference type="PIR" id="T39215">
    <property type="entry name" value="T39215"/>
</dbReference>
<dbReference type="RefSeq" id="NP_594581.1">
    <property type="nucleotide sequence ID" value="NM_001020010.2"/>
</dbReference>
<dbReference type="SMR" id="P36632"/>
<dbReference type="BioGRID" id="279714">
    <property type="interactions" value="109"/>
</dbReference>
<dbReference type="FunCoup" id="P36632">
    <property type="interactions" value="1"/>
</dbReference>
<dbReference type="IntAct" id="P36632">
    <property type="interactions" value="1"/>
</dbReference>
<dbReference type="STRING" id="284812.P36632"/>
<dbReference type="iPTMnet" id="P36632"/>
<dbReference type="PaxDb" id="4896-SPAC9E9.08.1"/>
<dbReference type="EnsemblFungi" id="SPAC9E9.08.1">
    <property type="protein sequence ID" value="SPAC9E9.08.1:pep"/>
    <property type="gene ID" value="SPAC9E9.08"/>
</dbReference>
<dbReference type="PomBase" id="SPAC9E9.08">
    <property type="gene designation" value="rad26"/>
</dbReference>
<dbReference type="VEuPathDB" id="FungiDB:SPAC9E9.08"/>
<dbReference type="HOGENOM" id="CLU_444924_0_0_1"/>
<dbReference type="InParanoid" id="P36632"/>
<dbReference type="OMA" id="YCASIKF"/>
<dbReference type="PRO" id="PR:P36632"/>
<dbReference type="Proteomes" id="UP000002485">
    <property type="component" value="Chromosome I"/>
</dbReference>
<dbReference type="GO" id="GO:0070310">
    <property type="term" value="C:ATR-ATRIP complex"/>
    <property type="evidence" value="ECO:0000314"/>
    <property type="project" value="PomBase"/>
</dbReference>
<dbReference type="GO" id="GO:0140445">
    <property type="term" value="C:chromosome, telomeric repeat region"/>
    <property type="evidence" value="ECO:0000314"/>
    <property type="project" value="PomBase"/>
</dbReference>
<dbReference type="GO" id="GO:0005634">
    <property type="term" value="C:nucleus"/>
    <property type="evidence" value="ECO:0000314"/>
    <property type="project" value="PomBase"/>
</dbReference>
<dbReference type="GO" id="GO:0031573">
    <property type="term" value="P:mitotic intra-S DNA damage checkpoint signaling"/>
    <property type="evidence" value="ECO:0000315"/>
    <property type="project" value="PomBase"/>
</dbReference>
<dbReference type="GO" id="GO:0000723">
    <property type="term" value="P:telomere maintenance"/>
    <property type="evidence" value="ECO:0000315"/>
    <property type="project" value="PomBase"/>
</dbReference>
<dbReference type="InterPro" id="IPR018622">
    <property type="entry name" value="DNA_damage_chkpnt_Lcd1"/>
</dbReference>
<dbReference type="Pfam" id="PF09798">
    <property type="entry name" value="LCD1"/>
    <property type="match status" value="2"/>
</dbReference>
<accession>P36632</accession>
<accession>O14292</accession>
<feature type="chain" id="PRO_0000097152" description="DNA repair protein rad26">
    <location>
        <begin position="1"/>
        <end position="614"/>
    </location>
</feature>
<feature type="region of interest" description="Disordered" evidence="1">
    <location>
        <begin position="29"/>
        <end position="76"/>
    </location>
</feature>
<feature type="region of interest" description="Disordered" evidence="1">
    <location>
        <begin position="157"/>
        <end position="214"/>
    </location>
</feature>
<feature type="compositionally biased region" description="Low complexity" evidence="1">
    <location>
        <begin position="29"/>
        <end position="43"/>
    </location>
</feature>
<feature type="compositionally biased region" description="Polar residues" evidence="1">
    <location>
        <begin position="50"/>
        <end position="76"/>
    </location>
</feature>
<feature type="compositionally biased region" description="Polar residues" evidence="1">
    <location>
        <begin position="181"/>
        <end position="190"/>
    </location>
</feature>
<feature type="compositionally biased region" description="Basic residues" evidence="1">
    <location>
        <begin position="191"/>
        <end position="207"/>
    </location>
</feature>
<feature type="sequence conflict" description="In Ref. 1; CAA54058." evidence="4" ref="1">
    <original>MKRDVK</original>
    <variation>NEKRCKR</variation>
    <location>
        <begin position="159"/>
        <end position="164"/>
    </location>
</feature>
<reference key="1">
    <citation type="journal article" date="1994" name="Mol. Biol. Cell">
        <title>Identification and characterization of new elements involved in checkpoint and feedback controls in fission yeast.</title>
        <authorList>
            <person name="Al-Khodairy F."/>
            <person name="Fotou E."/>
            <person name="Sheldrick K.S."/>
            <person name="Griffiths D.J.F."/>
            <person name="Lehmann A.R."/>
            <person name="Carr A.M."/>
        </authorList>
    </citation>
    <scope>NUCLEOTIDE SEQUENCE [GENOMIC DNA]</scope>
</reference>
<reference key="2">
    <citation type="journal article" date="2002" name="Nature">
        <title>The genome sequence of Schizosaccharomyces pombe.</title>
        <authorList>
            <person name="Wood V."/>
            <person name="Gwilliam R."/>
            <person name="Rajandream M.A."/>
            <person name="Lyne M.H."/>
            <person name="Lyne R."/>
            <person name="Stewart A."/>
            <person name="Sgouros J.G."/>
            <person name="Peat N."/>
            <person name="Hayles J."/>
            <person name="Baker S.G."/>
            <person name="Basham D."/>
            <person name="Bowman S."/>
            <person name="Brooks K."/>
            <person name="Brown D."/>
            <person name="Brown S."/>
            <person name="Chillingworth T."/>
            <person name="Churcher C.M."/>
            <person name="Collins M."/>
            <person name="Connor R."/>
            <person name="Cronin A."/>
            <person name="Davis P."/>
            <person name="Feltwell T."/>
            <person name="Fraser A."/>
            <person name="Gentles S."/>
            <person name="Goble A."/>
            <person name="Hamlin N."/>
            <person name="Harris D.E."/>
            <person name="Hidalgo J."/>
            <person name="Hodgson G."/>
            <person name="Holroyd S."/>
            <person name="Hornsby T."/>
            <person name="Howarth S."/>
            <person name="Huckle E.J."/>
            <person name="Hunt S."/>
            <person name="Jagels K."/>
            <person name="James K.D."/>
            <person name="Jones L."/>
            <person name="Jones M."/>
            <person name="Leather S."/>
            <person name="McDonald S."/>
            <person name="McLean J."/>
            <person name="Mooney P."/>
            <person name="Moule S."/>
            <person name="Mungall K.L."/>
            <person name="Murphy L.D."/>
            <person name="Niblett D."/>
            <person name="Odell C."/>
            <person name="Oliver K."/>
            <person name="O'Neil S."/>
            <person name="Pearson D."/>
            <person name="Quail M.A."/>
            <person name="Rabbinowitsch E."/>
            <person name="Rutherford K.M."/>
            <person name="Rutter S."/>
            <person name="Saunders D."/>
            <person name="Seeger K."/>
            <person name="Sharp S."/>
            <person name="Skelton J."/>
            <person name="Simmonds M.N."/>
            <person name="Squares R."/>
            <person name="Squares S."/>
            <person name="Stevens K."/>
            <person name="Taylor K."/>
            <person name="Taylor R.G."/>
            <person name="Tivey A."/>
            <person name="Walsh S.V."/>
            <person name="Warren T."/>
            <person name="Whitehead S."/>
            <person name="Woodward J.R."/>
            <person name="Volckaert G."/>
            <person name="Aert R."/>
            <person name="Robben J."/>
            <person name="Grymonprez B."/>
            <person name="Weltjens I."/>
            <person name="Vanstreels E."/>
            <person name="Rieger M."/>
            <person name="Schaefer M."/>
            <person name="Mueller-Auer S."/>
            <person name="Gabel C."/>
            <person name="Fuchs M."/>
            <person name="Duesterhoeft A."/>
            <person name="Fritzc C."/>
            <person name="Holzer E."/>
            <person name="Moestl D."/>
            <person name="Hilbert H."/>
            <person name="Borzym K."/>
            <person name="Langer I."/>
            <person name="Beck A."/>
            <person name="Lehrach H."/>
            <person name="Reinhardt R."/>
            <person name="Pohl T.M."/>
            <person name="Eger P."/>
            <person name="Zimmermann W."/>
            <person name="Wedler H."/>
            <person name="Wambutt R."/>
            <person name="Purnelle B."/>
            <person name="Goffeau A."/>
            <person name="Cadieu E."/>
            <person name="Dreano S."/>
            <person name="Gloux S."/>
            <person name="Lelaure V."/>
            <person name="Mottier S."/>
            <person name="Galibert F."/>
            <person name="Aves S.J."/>
            <person name="Xiang Z."/>
            <person name="Hunt C."/>
            <person name="Moore K."/>
            <person name="Hurst S.M."/>
            <person name="Lucas M."/>
            <person name="Rochet M."/>
            <person name="Gaillardin C."/>
            <person name="Tallada V.A."/>
            <person name="Garzon A."/>
            <person name="Thode G."/>
            <person name="Daga R.R."/>
            <person name="Cruzado L."/>
            <person name="Jimenez J."/>
            <person name="Sanchez M."/>
            <person name="del Rey F."/>
            <person name="Benito J."/>
            <person name="Dominguez A."/>
            <person name="Revuelta J.L."/>
            <person name="Moreno S."/>
            <person name="Armstrong J."/>
            <person name="Forsburg S.L."/>
            <person name="Cerutti L."/>
            <person name="Lowe T."/>
            <person name="McCombie W.R."/>
            <person name="Paulsen I."/>
            <person name="Potashkin J."/>
            <person name="Shpakovski G.V."/>
            <person name="Ussery D."/>
            <person name="Barrell B.G."/>
            <person name="Nurse P."/>
        </authorList>
    </citation>
    <scope>NUCLEOTIDE SEQUENCE [LARGE SCALE GENOMIC DNA]</scope>
    <source>
        <strain>972 / ATCC 24843</strain>
    </source>
</reference>
<reference key="3">
    <citation type="journal article" date="1998" name="Genes Dev.">
        <title>S-phase-specific activation of Cds1 kinase defines a subpathway of the checkpoint response in Schizosaccharomyces pombe.</title>
        <authorList>
            <person name="Lindsay H.D."/>
            <person name="Griffiths D.J.F."/>
            <person name="Edwards R.J."/>
            <person name="Christensen P.U."/>
            <person name="Murray J.M."/>
            <person name="Osman F."/>
            <person name="Walworth N."/>
            <person name="Carr A.M."/>
        </authorList>
    </citation>
    <scope>INTERACTION WITH CDS1</scope>
    <source>
        <strain>972 / ATCC 24843</strain>
    </source>
</reference>
<reference key="4">
    <citation type="journal article" date="2003" name="BMC Genet.">
        <title>Fission yeast Rad26 responds to DNA damage independently of Rad3.</title>
        <authorList>
            <person name="Wolkow T.D."/>
            <person name="Enoch T."/>
        </authorList>
    </citation>
    <scope>SUBCELLULAR LOCATION</scope>
</reference>
<name>RAD26_SCHPO</name>
<organism>
    <name type="scientific">Schizosaccharomyces pombe (strain 972 / ATCC 24843)</name>
    <name type="common">Fission yeast</name>
    <dbReference type="NCBI Taxonomy" id="284812"/>
    <lineage>
        <taxon>Eukaryota</taxon>
        <taxon>Fungi</taxon>
        <taxon>Dikarya</taxon>
        <taxon>Ascomycota</taxon>
        <taxon>Taphrinomycotina</taxon>
        <taxon>Schizosaccharomycetes</taxon>
        <taxon>Schizosaccharomycetales</taxon>
        <taxon>Schizosaccharomycetaceae</taxon>
        <taxon>Schizosaccharomyces</taxon>
    </lineage>
</organism>
<comment type="function">
    <text>Involved in cell cycle arrest when DNA synthesis is inhibited by hydroxyurea, and in mitosis arrest after treatment with DNA-damaging agents. This protein is S phase-specific.</text>
</comment>
<comment type="subunit">
    <text evidence="3">Interacts with cds1.</text>
</comment>
<comment type="subcellular location">
    <subcellularLocation>
        <location evidence="2">Nucleus</location>
    </subcellularLocation>
</comment>
<gene>
    <name type="primary">rad26</name>
    <name type="ORF">SPAC9E9.08</name>
</gene>
<protein>
    <recommendedName>
        <fullName>DNA repair protein rad26</fullName>
    </recommendedName>
</protein>
<evidence type="ECO:0000256" key="1">
    <source>
        <dbReference type="SAM" id="MobiDB-lite"/>
    </source>
</evidence>
<evidence type="ECO:0000269" key="2">
    <source>
    </source>
</evidence>
<evidence type="ECO:0000269" key="3">
    <source>
    </source>
</evidence>
<evidence type="ECO:0000305" key="4"/>
<keyword id="KW-0131">Cell cycle</keyword>
<keyword id="KW-0227">DNA damage</keyword>
<keyword id="KW-0539">Nucleus</keyword>
<keyword id="KW-1185">Reference proteome</keyword>